<sequence length="219" mass="25596">MKDFSDFFRNPHIWDREIVAVGGDLSPERLLYAYKNGIFPWSDQPILWYCLDPRSIFDLNKLHISKRLKRKINQKRYTITFNRAFEQVMRCCAYRPGEDTWITDLFIKSYTEFHKLGYAHSLEVWDENGKLGGGVYGIAIGNFFAGESMFSFIPDFGKIGLFHLFETLKKDHFTLFDTQQLNLVTLSLGAYQIPKKEYLKRLESAVASGKKWNPSHFVL</sequence>
<reference key="1">
    <citation type="journal article" date="2003" name="Nature">
        <title>Unique physiological and pathogenic features of Leptospira interrogans revealed by whole-genome sequencing.</title>
        <authorList>
            <person name="Ren S.-X."/>
            <person name="Fu G."/>
            <person name="Jiang X.-G."/>
            <person name="Zeng R."/>
            <person name="Miao Y.-G."/>
            <person name="Xu H."/>
            <person name="Zhang Y.-X."/>
            <person name="Xiong H."/>
            <person name="Lu G."/>
            <person name="Lu L.-F."/>
            <person name="Jiang H.-Q."/>
            <person name="Jia J."/>
            <person name="Tu Y.-F."/>
            <person name="Jiang J.-X."/>
            <person name="Gu W.-Y."/>
            <person name="Zhang Y.-Q."/>
            <person name="Cai Z."/>
            <person name="Sheng H.-H."/>
            <person name="Yin H.-F."/>
            <person name="Zhang Y."/>
            <person name="Zhu G.-F."/>
            <person name="Wan M."/>
            <person name="Huang H.-L."/>
            <person name="Qian Z."/>
            <person name="Wang S.-Y."/>
            <person name="Ma W."/>
            <person name="Yao Z.-J."/>
            <person name="Shen Y."/>
            <person name="Qiang B.-Q."/>
            <person name="Xia Q.-C."/>
            <person name="Guo X.-K."/>
            <person name="Danchin A."/>
            <person name="Saint Girons I."/>
            <person name="Somerville R.L."/>
            <person name="Wen Y.-M."/>
            <person name="Shi M.-H."/>
            <person name="Chen Z."/>
            <person name="Xu J.-G."/>
            <person name="Zhao G.-P."/>
        </authorList>
    </citation>
    <scope>NUCLEOTIDE SEQUENCE [LARGE SCALE GENOMIC DNA]</scope>
    <source>
        <strain>56601</strain>
    </source>
</reference>
<keyword id="KW-0012">Acyltransferase</keyword>
<keyword id="KW-0963">Cytoplasm</keyword>
<keyword id="KW-1185">Reference proteome</keyword>
<keyword id="KW-0808">Transferase</keyword>
<protein>
    <recommendedName>
        <fullName evidence="1">Leucyl/phenylalanyl-tRNA--protein transferase</fullName>
        <ecNumber evidence="1">2.3.2.6</ecNumber>
    </recommendedName>
    <alternativeName>
        <fullName evidence="1">L/F-transferase</fullName>
    </alternativeName>
    <alternativeName>
        <fullName evidence="1">Leucyltransferase</fullName>
    </alternativeName>
    <alternativeName>
        <fullName evidence="1">Phenyalanyltransferase</fullName>
    </alternativeName>
</protein>
<evidence type="ECO:0000255" key="1">
    <source>
        <dbReference type="HAMAP-Rule" id="MF_00688"/>
    </source>
</evidence>
<accession>Q8F9T2</accession>
<dbReference type="EC" id="2.3.2.6" evidence="1"/>
<dbReference type="EMBL" id="AE010300">
    <property type="protein sequence ID" value="AAN47307.1"/>
    <property type="molecule type" value="Genomic_DNA"/>
</dbReference>
<dbReference type="RefSeq" id="NP_710289.1">
    <property type="nucleotide sequence ID" value="NC_004342.2"/>
</dbReference>
<dbReference type="RefSeq" id="WP_000651373.1">
    <property type="nucleotide sequence ID" value="NC_004342.2"/>
</dbReference>
<dbReference type="SMR" id="Q8F9T2"/>
<dbReference type="FunCoup" id="Q8F9T2">
    <property type="interactions" value="218"/>
</dbReference>
<dbReference type="STRING" id="189518.LA_0108"/>
<dbReference type="PaxDb" id="189518-LA_0108"/>
<dbReference type="EnsemblBacteria" id="AAN47307">
    <property type="protein sequence ID" value="AAN47307"/>
    <property type="gene ID" value="LA_0108"/>
</dbReference>
<dbReference type="GeneID" id="61143452"/>
<dbReference type="KEGG" id="lil:LA_0108"/>
<dbReference type="PATRIC" id="fig|189518.3.peg.111"/>
<dbReference type="HOGENOM" id="CLU_075045_0_1_12"/>
<dbReference type="InParanoid" id="Q8F9T2"/>
<dbReference type="OrthoDB" id="9790282at2"/>
<dbReference type="Proteomes" id="UP000001408">
    <property type="component" value="Chromosome I"/>
</dbReference>
<dbReference type="GO" id="GO:0005737">
    <property type="term" value="C:cytoplasm"/>
    <property type="evidence" value="ECO:0000318"/>
    <property type="project" value="GO_Central"/>
</dbReference>
<dbReference type="GO" id="GO:0008914">
    <property type="term" value="F:leucyl-tRNA--protein transferase activity"/>
    <property type="evidence" value="ECO:0000318"/>
    <property type="project" value="GO_Central"/>
</dbReference>
<dbReference type="GO" id="GO:0030163">
    <property type="term" value="P:protein catabolic process"/>
    <property type="evidence" value="ECO:0007669"/>
    <property type="project" value="UniProtKB-UniRule"/>
</dbReference>
<dbReference type="FunFam" id="3.40.630.70:FF:000001">
    <property type="entry name" value="Leucyl/phenylalanyl-tRNA--protein transferase"/>
    <property type="match status" value="1"/>
</dbReference>
<dbReference type="Gene3D" id="3.40.630.70">
    <property type="entry name" value="Leucyl/phenylalanyl-tRNA-protein transferase, C-terminal domain"/>
    <property type="match status" value="1"/>
</dbReference>
<dbReference type="Gene3D" id="3.30.70.3550">
    <property type="entry name" value="Leucyl/phenylalanyl-tRNA-protein transferase, N-terminal domain"/>
    <property type="match status" value="1"/>
</dbReference>
<dbReference type="HAMAP" id="MF_00688">
    <property type="entry name" value="Leu_Phe_trans"/>
    <property type="match status" value="1"/>
</dbReference>
<dbReference type="InterPro" id="IPR016181">
    <property type="entry name" value="Acyl_CoA_acyltransferase"/>
</dbReference>
<dbReference type="InterPro" id="IPR004616">
    <property type="entry name" value="Leu/Phe-tRNA_Trfase"/>
</dbReference>
<dbReference type="InterPro" id="IPR042203">
    <property type="entry name" value="Leu/Phe-tRNA_Trfase_C"/>
</dbReference>
<dbReference type="InterPro" id="IPR042221">
    <property type="entry name" value="Leu/Phe-tRNA_Trfase_N"/>
</dbReference>
<dbReference type="NCBIfam" id="TIGR00667">
    <property type="entry name" value="aat"/>
    <property type="match status" value="1"/>
</dbReference>
<dbReference type="PANTHER" id="PTHR30098">
    <property type="entry name" value="LEUCYL/PHENYLALANYL-TRNA--PROTEIN TRANSFERASE"/>
    <property type="match status" value="1"/>
</dbReference>
<dbReference type="PANTHER" id="PTHR30098:SF2">
    <property type="entry name" value="LEUCYL_PHENYLALANYL-TRNA--PROTEIN TRANSFERASE"/>
    <property type="match status" value="1"/>
</dbReference>
<dbReference type="Pfam" id="PF03588">
    <property type="entry name" value="Leu_Phe_trans"/>
    <property type="match status" value="1"/>
</dbReference>
<dbReference type="SUPFAM" id="SSF55729">
    <property type="entry name" value="Acyl-CoA N-acyltransferases (Nat)"/>
    <property type="match status" value="1"/>
</dbReference>
<organism>
    <name type="scientific">Leptospira interrogans serogroup Icterohaemorrhagiae serovar Lai (strain 56601)</name>
    <dbReference type="NCBI Taxonomy" id="189518"/>
    <lineage>
        <taxon>Bacteria</taxon>
        <taxon>Pseudomonadati</taxon>
        <taxon>Spirochaetota</taxon>
        <taxon>Spirochaetia</taxon>
        <taxon>Leptospirales</taxon>
        <taxon>Leptospiraceae</taxon>
        <taxon>Leptospira</taxon>
    </lineage>
</organism>
<comment type="function">
    <text evidence="1">Functions in the N-end rule pathway of protein degradation where it conjugates Leu, Phe and, less efficiently, Met from aminoacyl-tRNAs to the N-termini of proteins containing an N-terminal arginine or lysine.</text>
</comment>
<comment type="catalytic activity">
    <reaction evidence="1">
        <text>N-terminal L-lysyl-[protein] + L-leucyl-tRNA(Leu) = N-terminal L-leucyl-L-lysyl-[protein] + tRNA(Leu) + H(+)</text>
        <dbReference type="Rhea" id="RHEA:12340"/>
        <dbReference type="Rhea" id="RHEA-COMP:9613"/>
        <dbReference type="Rhea" id="RHEA-COMP:9622"/>
        <dbReference type="Rhea" id="RHEA-COMP:12670"/>
        <dbReference type="Rhea" id="RHEA-COMP:12671"/>
        <dbReference type="ChEBI" id="CHEBI:15378"/>
        <dbReference type="ChEBI" id="CHEBI:65249"/>
        <dbReference type="ChEBI" id="CHEBI:78442"/>
        <dbReference type="ChEBI" id="CHEBI:78494"/>
        <dbReference type="ChEBI" id="CHEBI:133043"/>
        <dbReference type="EC" id="2.3.2.6"/>
    </reaction>
</comment>
<comment type="catalytic activity">
    <reaction evidence="1">
        <text>N-terminal L-arginyl-[protein] + L-leucyl-tRNA(Leu) = N-terminal L-leucyl-L-arginyl-[protein] + tRNA(Leu) + H(+)</text>
        <dbReference type="Rhea" id="RHEA:50416"/>
        <dbReference type="Rhea" id="RHEA-COMP:9613"/>
        <dbReference type="Rhea" id="RHEA-COMP:9622"/>
        <dbReference type="Rhea" id="RHEA-COMP:12672"/>
        <dbReference type="Rhea" id="RHEA-COMP:12673"/>
        <dbReference type="ChEBI" id="CHEBI:15378"/>
        <dbReference type="ChEBI" id="CHEBI:64719"/>
        <dbReference type="ChEBI" id="CHEBI:78442"/>
        <dbReference type="ChEBI" id="CHEBI:78494"/>
        <dbReference type="ChEBI" id="CHEBI:133044"/>
        <dbReference type="EC" id="2.3.2.6"/>
    </reaction>
</comment>
<comment type="catalytic activity">
    <reaction evidence="1">
        <text>L-phenylalanyl-tRNA(Phe) + an N-terminal L-alpha-aminoacyl-[protein] = an N-terminal L-phenylalanyl-L-alpha-aminoacyl-[protein] + tRNA(Phe)</text>
        <dbReference type="Rhea" id="RHEA:43632"/>
        <dbReference type="Rhea" id="RHEA-COMP:9668"/>
        <dbReference type="Rhea" id="RHEA-COMP:9699"/>
        <dbReference type="Rhea" id="RHEA-COMP:10636"/>
        <dbReference type="Rhea" id="RHEA-COMP:10637"/>
        <dbReference type="ChEBI" id="CHEBI:78442"/>
        <dbReference type="ChEBI" id="CHEBI:78531"/>
        <dbReference type="ChEBI" id="CHEBI:78597"/>
        <dbReference type="ChEBI" id="CHEBI:83561"/>
        <dbReference type="EC" id="2.3.2.6"/>
    </reaction>
</comment>
<comment type="subcellular location">
    <subcellularLocation>
        <location evidence="1">Cytoplasm</location>
    </subcellularLocation>
</comment>
<comment type="similarity">
    <text evidence="1">Belongs to the L/F-transferase family.</text>
</comment>
<proteinExistence type="inferred from homology"/>
<gene>
    <name evidence="1" type="primary">aat</name>
    <name type="ordered locus">LA_0108</name>
</gene>
<feature type="chain" id="PRO_0000207227" description="Leucyl/phenylalanyl-tRNA--protein transferase">
    <location>
        <begin position="1"/>
        <end position="219"/>
    </location>
</feature>
<name>LFTR_LEPIN</name>